<proteinExistence type="inferred from homology"/>
<sequence>MAYNKSLKSLVFILLASQIVFVLFLCYGKSSRELGVKWNSDIRSWMTSYVGFNGETAAISEEQLIWAEKIPDYNEEIVVRLHLEEENNLSDILQKAQSQNLDIWDYNFDHVDLRLKEENFDFWKSQYRSDILINNLTETLFESIVPDTTNSPFSTEAFLQAVENGHLNHEMFTSFTDIFFKSYQNLESINSWLRLMASLYKDLSELVPVGITAEGRTILGLKLNGRHPSDNGEKIRNKKVIIIQGGSHAREWIGIPSVCYAAWQLLAKYDSDGHVRKLLDKFEWIFIPVLNVDGYEYTWSNDRLWSKNRQPLNNSECFGINLDANWAFGFNGNIDPCSNEYGGLSPFQANETMALFNLITESLSQEQKKVVGFLDVHSYSQSVLWPYAYTCDLFPPDTENFEELAIGLVKELHRVNSRYYTYQQACIPYDGFHKHYLPGTAIDWVYFAADVAWPFNIRLRDMGDYGYLLPAKQIVPTAKEFFAMILYYGEFIAEYAF</sequence>
<protein>
    <recommendedName>
        <fullName evidence="7">Inactive metallocarboxypeptidase ecm14</fullName>
    </recommendedName>
</protein>
<organism>
    <name type="scientific">Schizosaccharomyces pombe (strain 972 / ATCC 24843)</name>
    <name type="common">Fission yeast</name>
    <dbReference type="NCBI Taxonomy" id="284812"/>
    <lineage>
        <taxon>Eukaryota</taxon>
        <taxon>Fungi</taxon>
        <taxon>Dikarya</taxon>
        <taxon>Ascomycota</taxon>
        <taxon>Taphrinomycotina</taxon>
        <taxon>Schizosaccharomycetes</taxon>
        <taxon>Schizosaccharomycetales</taxon>
        <taxon>Schizosaccharomycetaceae</taxon>
        <taxon>Schizosaccharomyces</taxon>
    </lineage>
</organism>
<name>ECM14_SCHPO</name>
<comment type="function">
    <text evidence="3">Inactive carboxypeptidase that may play a role in cell wall organization and biogenesis.</text>
</comment>
<comment type="cofactor">
    <cofactor evidence="1">
        <name>Zn(2+)</name>
        <dbReference type="ChEBI" id="CHEBI:29105"/>
    </cofactor>
    <text evidence="1">Binds 1 zinc ion per subunit.</text>
</comment>
<comment type="subcellular location">
    <subcellularLocation>
        <location evidence="6">Endoplasmic reticulum</location>
    </subcellularLocation>
    <subcellularLocation>
        <location evidence="3">Secreted</location>
    </subcellularLocation>
</comment>
<comment type="similarity">
    <text evidence="7">Belongs to the peptidase M14 family.</text>
</comment>
<comment type="caution">
    <text evidence="3">Lacks the conserved Glu residue in position 458 essential for carbopeptidase activity. The mature form lacks catalytic activity towards synthetic peptide substrates.</text>
</comment>
<gene>
    <name evidence="8" type="primary">ecm14</name>
    <name evidence="8" type="ORF">SPBC337.07c</name>
</gene>
<accession>O74818</accession>
<feature type="signal peptide" evidence="4">
    <location>
        <begin position="1"/>
        <end position="28"/>
    </location>
</feature>
<feature type="propeptide" id="PRO_0000453256" evidence="3">
    <location>
        <begin position="29"/>
        <end position="148"/>
    </location>
</feature>
<feature type="chain" id="PRO_0000310336" description="Inactive metallocarboxypeptidase ecm14">
    <location>
        <begin position="149"/>
        <end position="497"/>
    </location>
</feature>
<feature type="domain" description="Peptidase M14" evidence="5">
    <location>
        <begin position="182"/>
        <end position="492"/>
    </location>
</feature>
<feature type="binding site" evidence="1">
    <location>
        <begin position="248"/>
        <end position="251"/>
    </location>
    <ligand>
        <name>substrate</name>
    </ligand>
</feature>
<feature type="binding site" evidence="5">
    <location>
        <position position="248"/>
    </location>
    <ligand>
        <name>Zn(2+)</name>
        <dbReference type="ChEBI" id="CHEBI:29105"/>
        <note>catalytic</note>
    </ligand>
</feature>
<feature type="binding site" evidence="5">
    <location>
        <position position="251"/>
    </location>
    <ligand>
        <name>Zn(2+)</name>
        <dbReference type="ChEBI" id="CHEBI:29105"/>
        <note>catalytic</note>
    </ligand>
</feature>
<feature type="binding site" evidence="1">
    <location>
        <begin position="323"/>
        <end position="324"/>
    </location>
    <ligand>
        <name>substrate</name>
    </ligand>
</feature>
<feature type="binding site" evidence="5">
    <location>
        <position position="377"/>
    </location>
    <ligand>
        <name>Zn(2+)</name>
        <dbReference type="ChEBI" id="CHEBI:29105"/>
        <note>catalytic</note>
    </ligand>
</feature>
<feature type="binding site" evidence="1">
    <location>
        <begin position="378"/>
        <end position="379"/>
    </location>
    <ligand>
        <name>substrate</name>
    </ligand>
</feature>
<feature type="disulfide bond" evidence="2">
    <location>
        <begin position="317"/>
        <end position="337"/>
    </location>
</feature>
<reference key="1">
    <citation type="journal article" date="2002" name="Nature">
        <title>The genome sequence of Schizosaccharomyces pombe.</title>
        <authorList>
            <person name="Wood V."/>
            <person name="Gwilliam R."/>
            <person name="Rajandream M.A."/>
            <person name="Lyne M.H."/>
            <person name="Lyne R."/>
            <person name="Stewart A."/>
            <person name="Sgouros J.G."/>
            <person name="Peat N."/>
            <person name="Hayles J."/>
            <person name="Baker S.G."/>
            <person name="Basham D."/>
            <person name="Bowman S."/>
            <person name="Brooks K."/>
            <person name="Brown D."/>
            <person name="Brown S."/>
            <person name="Chillingworth T."/>
            <person name="Churcher C.M."/>
            <person name="Collins M."/>
            <person name="Connor R."/>
            <person name="Cronin A."/>
            <person name="Davis P."/>
            <person name="Feltwell T."/>
            <person name="Fraser A."/>
            <person name="Gentles S."/>
            <person name="Goble A."/>
            <person name="Hamlin N."/>
            <person name="Harris D.E."/>
            <person name="Hidalgo J."/>
            <person name="Hodgson G."/>
            <person name="Holroyd S."/>
            <person name="Hornsby T."/>
            <person name="Howarth S."/>
            <person name="Huckle E.J."/>
            <person name="Hunt S."/>
            <person name="Jagels K."/>
            <person name="James K.D."/>
            <person name="Jones L."/>
            <person name="Jones M."/>
            <person name="Leather S."/>
            <person name="McDonald S."/>
            <person name="McLean J."/>
            <person name="Mooney P."/>
            <person name="Moule S."/>
            <person name="Mungall K.L."/>
            <person name="Murphy L.D."/>
            <person name="Niblett D."/>
            <person name="Odell C."/>
            <person name="Oliver K."/>
            <person name="O'Neil S."/>
            <person name="Pearson D."/>
            <person name="Quail M.A."/>
            <person name="Rabbinowitsch E."/>
            <person name="Rutherford K.M."/>
            <person name="Rutter S."/>
            <person name="Saunders D."/>
            <person name="Seeger K."/>
            <person name="Sharp S."/>
            <person name="Skelton J."/>
            <person name="Simmonds M.N."/>
            <person name="Squares R."/>
            <person name="Squares S."/>
            <person name="Stevens K."/>
            <person name="Taylor K."/>
            <person name="Taylor R.G."/>
            <person name="Tivey A."/>
            <person name="Walsh S.V."/>
            <person name="Warren T."/>
            <person name="Whitehead S."/>
            <person name="Woodward J.R."/>
            <person name="Volckaert G."/>
            <person name="Aert R."/>
            <person name="Robben J."/>
            <person name="Grymonprez B."/>
            <person name="Weltjens I."/>
            <person name="Vanstreels E."/>
            <person name="Rieger M."/>
            <person name="Schaefer M."/>
            <person name="Mueller-Auer S."/>
            <person name="Gabel C."/>
            <person name="Fuchs M."/>
            <person name="Duesterhoeft A."/>
            <person name="Fritzc C."/>
            <person name="Holzer E."/>
            <person name="Moestl D."/>
            <person name="Hilbert H."/>
            <person name="Borzym K."/>
            <person name="Langer I."/>
            <person name="Beck A."/>
            <person name="Lehrach H."/>
            <person name="Reinhardt R."/>
            <person name="Pohl T.M."/>
            <person name="Eger P."/>
            <person name="Zimmermann W."/>
            <person name="Wedler H."/>
            <person name="Wambutt R."/>
            <person name="Purnelle B."/>
            <person name="Goffeau A."/>
            <person name="Cadieu E."/>
            <person name="Dreano S."/>
            <person name="Gloux S."/>
            <person name="Lelaure V."/>
            <person name="Mottier S."/>
            <person name="Galibert F."/>
            <person name="Aves S.J."/>
            <person name="Xiang Z."/>
            <person name="Hunt C."/>
            <person name="Moore K."/>
            <person name="Hurst S.M."/>
            <person name="Lucas M."/>
            <person name="Rochet M."/>
            <person name="Gaillardin C."/>
            <person name="Tallada V.A."/>
            <person name="Garzon A."/>
            <person name="Thode G."/>
            <person name="Daga R.R."/>
            <person name="Cruzado L."/>
            <person name="Jimenez J."/>
            <person name="Sanchez M."/>
            <person name="del Rey F."/>
            <person name="Benito J."/>
            <person name="Dominguez A."/>
            <person name="Revuelta J.L."/>
            <person name="Moreno S."/>
            <person name="Armstrong J."/>
            <person name="Forsburg S.L."/>
            <person name="Cerutti L."/>
            <person name="Lowe T."/>
            <person name="McCombie W.R."/>
            <person name="Paulsen I."/>
            <person name="Potashkin J."/>
            <person name="Shpakovski G.V."/>
            <person name="Ussery D."/>
            <person name="Barrell B.G."/>
            <person name="Nurse P."/>
        </authorList>
    </citation>
    <scope>NUCLEOTIDE SEQUENCE [LARGE SCALE GENOMIC DNA]</scope>
    <source>
        <strain>972 / ATCC 24843</strain>
    </source>
</reference>
<reference key="2">
    <citation type="journal article" date="2006" name="Nat. Biotechnol.">
        <title>ORFeome cloning and global analysis of protein localization in the fission yeast Schizosaccharomyces pombe.</title>
        <authorList>
            <person name="Matsuyama A."/>
            <person name="Arai R."/>
            <person name="Yashiroda Y."/>
            <person name="Shirai A."/>
            <person name="Kamata A."/>
            <person name="Sekido S."/>
            <person name="Kobayashi Y."/>
            <person name="Hashimoto A."/>
            <person name="Hamamoto M."/>
            <person name="Hiraoka Y."/>
            <person name="Horinouchi S."/>
            <person name="Yoshida M."/>
        </authorList>
    </citation>
    <scope>SUBCELLULAR LOCATION [LARGE SCALE ANALYSIS]</scope>
</reference>
<dbReference type="EMBL" id="CU329671">
    <property type="protein sequence ID" value="CAA21277.1"/>
    <property type="molecule type" value="Genomic_DNA"/>
</dbReference>
<dbReference type="PIR" id="T40260">
    <property type="entry name" value="T40260"/>
</dbReference>
<dbReference type="RefSeq" id="NP_595408.1">
    <property type="nucleotide sequence ID" value="NM_001021315.2"/>
</dbReference>
<dbReference type="SMR" id="O74818"/>
<dbReference type="BioGRID" id="277582">
    <property type="interactions" value="2"/>
</dbReference>
<dbReference type="FunCoup" id="O74818">
    <property type="interactions" value="6"/>
</dbReference>
<dbReference type="STRING" id="284812.O74818"/>
<dbReference type="iPTMnet" id="O74818"/>
<dbReference type="PaxDb" id="4896-SPBC337.07c.1"/>
<dbReference type="EnsemblFungi" id="SPBC337.07c.1">
    <property type="protein sequence ID" value="SPBC337.07c.1:pep"/>
    <property type="gene ID" value="SPBC337.07c"/>
</dbReference>
<dbReference type="GeneID" id="2541067"/>
<dbReference type="KEGG" id="spo:2541067"/>
<dbReference type="PomBase" id="SPBC337.07c">
    <property type="gene designation" value="ecm14"/>
</dbReference>
<dbReference type="VEuPathDB" id="FungiDB:SPBC337.07c"/>
<dbReference type="eggNOG" id="KOG2650">
    <property type="taxonomic scope" value="Eukaryota"/>
</dbReference>
<dbReference type="HOGENOM" id="CLU_019326_1_0_1"/>
<dbReference type="InParanoid" id="O74818"/>
<dbReference type="OMA" id="HQHAREH"/>
<dbReference type="PhylomeDB" id="O74818"/>
<dbReference type="PRO" id="PR:O74818"/>
<dbReference type="Proteomes" id="UP000002485">
    <property type="component" value="Chromosome II"/>
</dbReference>
<dbReference type="GO" id="GO:0005783">
    <property type="term" value="C:endoplasmic reticulum"/>
    <property type="evidence" value="ECO:0007669"/>
    <property type="project" value="UniProtKB-SubCell"/>
</dbReference>
<dbReference type="GO" id="GO:0005615">
    <property type="term" value="C:extracellular space"/>
    <property type="evidence" value="ECO:0000318"/>
    <property type="project" value="GO_Central"/>
</dbReference>
<dbReference type="GO" id="GO:0008270">
    <property type="term" value="F:zinc ion binding"/>
    <property type="evidence" value="ECO:0007669"/>
    <property type="project" value="InterPro"/>
</dbReference>
<dbReference type="GO" id="GO:0006508">
    <property type="term" value="P:proteolysis"/>
    <property type="evidence" value="ECO:0007669"/>
    <property type="project" value="InterPro"/>
</dbReference>
<dbReference type="CDD" id="cd03860">
    <property type="entry name" value="M14_CP_A-B_like"/>
    <property type="match status" value="1"/>
</dbReference>
<dbReference type="FunFam" id="3.40.630.10:FF:000060">
    <property type="entry name" value="Putative metallocarboxypeptidase ecm14"/>
    <property type="match status" value="1"/>
</dbReference>
<dbReference type="Gene3D" id="3.40.630.10">
    <property type="entry name" value="Zn peptidases"/>
    <property type="match status" value="1"/>
</dbReference>
<dbReference type="InterPro" id="IPR000834">
    <property type="entry name" value="Peptidase_M14"/>
</dbReference>
<dbReference type="PANTHER" id="PTHR11705:SF147">
    <property type="entry name" value="INACTIVE METALLOCARBOXYPEPTIDASE ECM14"/>
    <property type="match status" value="1"/>
</dbReference>
<dbReference type="PANTHER" id="PTHR11705">
    <property type="entry name" value="PROTEASE FAMILY M14 CARBOXYPEPTIDASE A,B"/>
    <property type="match status" value="1"/>
</dbReference>
<dbReference type="Pfam" id="PF00246">
    <property type="entry name" value="Peptidase_M14"/>
    <property type="match status" value="1"/>
</dbReference>
<dbReference type="PRINTS" id="PR00765">
    <property type="entry name" value="CRBOXYPTASEA"/>
</dbReference>
<dbReference type="SMART" id="SM00631">
    <property type="entry name" value="Zn_pept"/>
    <property type="match status" value="1"/>
</dbReference>
<dbReference type="SUPFAM" id="SSF53187">
    <property type="entry name" value="Zn-dependent exopeptidases"/>
    <property type="match status" value="1"/>
</dbReference>
<dbReference type="PROSITE" id="PS00132">
    <property type="entry name" value="CARBOXYPEPT_ZN_1"/>
    <property type="match status" value="1"/>
</dbReference>
<dbReference type="PROSITE" id="PS52035">
    <property type="entry name" value="PEPTIDASE_M14"/>
    <property type="match status" value="1"/>
</dbReference>
<evidence type="ECO:0000250" key="1">
    <source>
        <dbReference type="UniProtKB" id="P00730"/>
    </source>
</evidence>
<evidence type="ECO:0000250" key="2">
    <source>
        <dbReference type="UniProtKB" id="P15085"/>
    </source>
</evidence>
<evidence type="ECO:0000250" key="3">
    <source>
        <dbReference type="UniProtKB" id="P38836"/>
    </source>
</evidence>
<evidence type="ECO:0000255" key="4"/>
<evidence type="ECO:0000255" key="5">
    <source>
        <dbReference type="PROSITE-ProRule" id="PRU01379"/>
    </source>
</evidence>
<evidence type="ECO:0000269" key="6">
    <source>
    </source>
</evidence>
<evidence type="ECO:0000305" key="7"/>
<evidence type="ECO:0000312" key="8">
    <source>
        <dbReference type="PomBase" id="SPBC337.07c"/>
    </source>
</evidence>
<keyword id="KW-1015">Disulfide bond</keyword>
<keyword id="KW-0256">Endoplasmic reticulum</keyword>
<keyword id="KW-0479">Metal-binding</keyword>
<keyword id="KW-1185">Reference proteome</keyword>
<keyword id="KW-0964">Secreted</keyword>
<keyword id="KW-0732">Signal</keyword>
<keyword id="KW-0862">Zinc</keyword>